<gene>
    <name evidence="1" type="primary">nifW</name>
    <name type="ordered locus">RPD_1087</name>
</gene>
<protein>
    <recommendedName>
        <fullName evidence="1">Nitrogenase-stabilizing/protective protein NifW</fullName>
    </recommendedName>
</protein>
<reference key="1">
    <citation type="submission" date="2006-03" db="EMBL/GenBank/DDBJ databases">
        <title>Complete sequence of Rhodopseudomonas palustris BisB5.</title>
        <authorList>
            <consortium name="US DOE Joint Genome Institute"/>
            <person name="Copeland A."/>
            <person name="Lucas S."/>
            <person name="Lapidus A."/>
            <person name="Barry K."/>
            <person name="Detter J.C."/>
            <person name="Glavina del Rio T."/>
            <person name="Hammon N."/>
            <person name="Israni S."/>
            <person name="Dalin E."/>
            <person name="Tice H."/>
            <person name="Pitluck S."/>
            <person name="Chain P."/>
            <person name="Malfatti S."/>
            <person name="Shin M."/>
            <person name="Vergez L."/>
            <person name="Schmutz J."/>
            <person name="Larimer F."/>
            <person name="Land M."/>
            <person name="Hauser L."/>
            <person name="Pelletier D.A."/>
            <person name="Kyrpides N."/>
            <person name="Lykidis A."/>
            <person name="Oda Y."/>
            <person name="Harwood C.S."/>
            <person name="Richardson P."/>
        </authorList>
    </citation>
    <scope>NUCLEOTIDE SEQUENCE [LARGE SCALE GENOMIC DNA]</scope>
    <source>
        <strain>BisB5</strain>
    </source>
</reference>
<organism>
    <name type="scientific">Rhodopseudomonas palustris (strain BisB5)</name>
    <dbReference type="NCBI Taxonomy" id="316057"/>
    <lineage>
        <taxon>Bacteria</taxon>
        <taxon>Pseudomonadati</taxon>
        <taxon>Pseudomonadota</taxon>
        <taxon>Alphaproteobacteria</taxon>
        <taxon>Hyphomicrobiales</taxon>
        <taxon>Nitrobacteraceae</taxon>
        <taxon>Rhodopseudomonas</taxon>
    </lineage>
</organism>
<comment type="function">
    <text evidence="1">May protect the nitrogenase Fe-Mo protein from oxidative damage.</text>
</comment>
<comment type="subunit">
    <text evidence="1">Homotrimer; associates with NifD.</text>
</comment>
<comment type="similarity">
    <text evidence="1">Belongs to the NifW family.</text>
</comment>
<feature type="chain" id="PRO_0000265755" description="Nitrogenase-stabilizing/protective protein NifW">
    <location>
        <begin position="1"/>
        <end position="118"/>
    </location>
</feature>
<keyword id="KW-0535">Nitrogen fixation</keyword>
<name>NIFW_RHOPS</name>
<proteinExistence type="inferred from homology"/>
<sequence>MSASQLETTEPADIVGQLQRAASAEDFFELLDVDFDPKVVNVARLHILKRMGQYLASEDLDGLPSAETKARCKTVLERAYADFVESSPLDQRVFKVLKDAVAPKSPRRPAFVSLDNLK</sequence>
<dbReference type="EMBL" id="CP000283">
    <property type="protein sequence ID" value="ABE38325.1"/>
    <property type="molecule type" value="Genomic_DNA"/>
</dbReference>
<dbReference type="SMR" id="Q13C64"/>
<dbReference type="STRING" id="316057.RPD_1087"/>
<dbReference type="KEGG" id="rpd:RPD_1087"/>
<dbReference type="eggNOG" id="ENOG50330W8">
    <property type="taxonomic scope" value="Bacteria"/>
</dbReference>
<dbReference type="HOGENOM" id="CLU_145318_0_0_5"/>
<dbReference type="BioCyc" id="RPAL316057:RPD_RS05515-MONOMER"/>
<dbReference type="Proteomes" id="UP000001818">
    <property type="component" value="Chromosome"/>
</dbReference>
<dbReference type="GO" id="GO:0009399">
    <property type="term" value="P:nitrogen fixation"/>
    <property type="evidence" value="ECO:0007669"/>
    <property type="project" value="UniProtKB-UniRule"/>
</dbReference>
<dbReference type="HAMAP" id="MF_00529">
    <property type="entry name" value="NifW"/>
    <property type="match status" value="1"/>
</dbReference>
<dbReference type="InterPro" id="IPR004893">
    <property type="entry name" value="NifW"/>
</dbReference>
<dbReference type="NCBIfam" id="NF002009">
    <property type="entry name" value="PRK00810.1"/>
    <property type="match status" value="1"/>
</dbReference>
<dbReference type="Pfam" id="PF03206">
    <property type="entry name" value="NifW"/>
    <property type="match status" value="1"/>
</dbReference>
<dbReference type="PIRSF" id="PIRSF005790">
    <property type="entry name" value="NifW"/>
    <property type="match status" value="1"/>
</dbReference>
<accession>Q13C64</accession>
<evidence type="ECO:0000255" key="1">
    <source>
        <dbReference type="HAMAP-Rule" id="MF_00529"/>
    </source>
</evidence>